<organism>
    <name type="scientific">Homo sapiens</name>
    <name type="common">Human</name>
    <dbReference type="NCBI Taxonomy" id="9606"/>
    <lineage>
        <taxon>Eukaryota</taxon>
        <taxon>Metazoa</taxon>
        <taxon>Chordata</taxon>
        <taxon>Craniata</taxon>
        <taxon>Vertebrata</taxon>
        <taxon>Euteleostomi</taxon>
        <taxon>Mammalia</taxon>
        <taxon>Eutheria</taxon>
        <taxon>Euarchontoglires</taxon>
        <taxon>Primates</taxon>
        <taxon>Haplorrhini</taxon>
        <taxon>Catarrhini</taxon>
        <taxon>Hominidae</taxon>
        <taxon>Homo</taxon>
    </lineage>
</organism>
<sequence>MRDRTHELRQGDDSSDEEDKERVALVVHPGTARLGSPDEEFFHKVRTIRQTIVKLGNKVQELEKQQVTILATPLPEESMKQELQNLRDEIKQLGREIRLQLKAIEPQKEEADENYNSVNTRMRKTQHGVLSQQFVELINKCNSMQSEYREKNVERIRRQLKITNAGMVSDEELEQMLDSGQSEVFVSNILKDTQVTRQALNEISARHSEIQQLERSIRELHDIFTFLATEVEMQGEMINRIEKNILSSADYVERGQEHVKTALENQKKARKKKVLIAICVSITVVLLAVIIGVTVVG</sequence>
<keyword id="KW-0025">Alternative splicing</keyword>
<keyword id="KW-1003">Cell membrane</keyword>
<keyword id="KW-0966">Cell projection</keyword>
<keyword id="KW-0175">Coiled coil</keyword>
<keyword id="KW-0209">Deafness</keyword>
<keyword id="KW-1009">Hearing</keyword>
<keyword id="KW-0472">Membrane</keyword>
<keyword id="KW-0532">Neurotransmitter transport</keyword>
<keyword id="KW-1010">Non-syndromic deafness</keyword>
<keyword id="KW-0597">Phosphoprotein</keyword>
<keyword id="KW-1267">Proteomics identification</keyword>
<keyword id="KW-1185">Reference proteome</keyword>
<keyword id="KW-0812">Transmembrane</keyword>
<keyword id="KW-1133">Transmembrane helix</keyword>
<keyword id="KW-0813">Transport</keyword>
<proteinExistence type="evidence at protein level"/>
<gene>
    <name type="primary">STX4</name>
    <name type="synonym">STX4A</name>
</gene>
<evidence type="ECO:0000250" key="1"/>
<evidence type="ECO:0000250" key="2">
    <source>
        <dbReference type="UniProtKB" id="P70452"/>
    </source>
</evidence>
<evidence type="ECO:0000250" key="3">
    <source>
        <dbReference type="UniProtKB" id="Q08850"/>
    </source>
</evidence>
<evidence type="ECO:0000255" key="4"/>
<evidence type="ECO:0000255" key="5">
    <source>
        <dbReference type="PROSITE-ProRule" id="PRU00202"/>
    </source>
</evidence>
<evidence type="ECO:0000256" key="6">
    <source>
        <dbReference type="SAM" id="MobiDB-lite"/>
    </source>
</evidence>
<evidence type="ECO:0000269" key="7">
    <source>
    </source>
</evidence>
<evidence type="ECO:0000269" key="8">
    <source>
    </source>
</evidence>
<evidence type="ECO:0000303" key="9">
    <source>
    </source>
</evidence>
<evidence type="ECO:0000305" key="10"/>
<evidence type="ECO:0007744" key="11">
    <source>
    </source>
</evidence>
<evidence type="ECO:0007744" key="12">
    <source>
    </source>
</evidence>
<evidence type="ECO:0007744" key="13">
    <source>
    </source>
</evidence>
<evidence type="ECO:0007744" key="14">
    <source>
    </source>
</evidence>
<protein>
    <recommendedName>
        <fullName>Syntaxin-4</fullName>
    </recommendedName>
    <alternativeName>
        <fullName>Renal carcinoma antigen NY-REN-31</fullName>
    </alternativeName>
</protein>
<comment type="function">
    <text evidence="2 3 8">Plasma membrane t-SNARE that mediates docking of transport vesicles (By similarity). Necessary for the translocation of SLC2A4 from intracellular vesicles to the plasma membrane (By similarity). In neurons, recruited at neurite tips to membrane domains rich in the phospholipid 1-oleoyl-2-palmitoyl-PC (OPPC) which promotes neurite tip surface expression of the dopamine transporter SLC6A3/DAT by facilitating fusion of SLC6A3-containing transport vesicles with the plasma membrane (By similarity). Together with STXB3 and VAMP2, may also play a role in docking/fusion of intracellular GLUT4-containing vesicles with the cell surface in adipocytes and in docking of synaptic vesicles at presynaptic active zones (By similarity). Required for normal hearing (PubMed:36355422).</text>
</comment>
<comment type="subunit">
    <text evidence="1">Component of the SNARE complex composed of STX4, SNAP23 and VAMP7 that interacts with SYT7 during lysosomal exocytosis. Found in a complex with VAMP8 and SNAP23. Detected in a complex with SNAP23 and STXBP4. Interacts with VAMP2. Interacts with SNAP23 and SNAPIN. Interacts with LLGL1. Interacts (via C-terminus) with CENPF. Interacts with DOC2B. Interacts with STXBP6. Interacts with STXBP3; excludes interaction with DOC2B and SNAP25. Interacts with STXBP4; excludes interaction with VAMP2 (By similarity). Interacts with STXBP5L (By similarity).</text>
</comment>
<comment type="interaction">
    <interactant intactId="EBI-744942">
        <id>Q12846</id>
    </interactant>
    <interactant intactId="EBI-11096309">
        <id>Q9NYB9-2</id>
        <label>ABI2</label>
    </interactant>
    <organismsDiffer>false</organismsDiffer>
    <experiments>3</experiments>
</comment>
<comment type="interaction">
    <interactant intactId="EBI-744942">
        <id>Q12846</id>
    </interactant>
    <interactant intactId="EBI-12109402">
        <id>Q86W74-2</id>
        <label>ANKRD46</label>
    </interactant>
    <organismsDiffer>false</organismsDiffer>
    <experiments>3</experiments>
</comment>
<comment type="interaction">
    <interactant intactId="EBI-744942">
        <id>Q12846</id>
    </interactant>
    <interactant intactId="EBI-749204">
        <id>O15155</id>
        <label>BET1</label>
    </interactant>
    <organismsDiffer>false</organismsDiffer>
    <experiments>6</experiments>
</comment>
<comment type="interaction">
    <interactant intactId="EBI-744942">
        <id>Q12846</id>
    </interactant>
    <interactant intactId="EBI-8637742">
        <id>Q53TN4</id>
        <label>CYBRD1</label>
    </interactant>
    <organismsDiffer>false</organismsDiffer>
    <experiments>7</experiments>
</comment>
<comment type="interaction">
    <interactant intactId="EBI-744942">
        <id>Q12846</id>
    </interactant>
    <interactant intactId="EBI-489887">
        <id>P50402</id>
        <label>EMD</label>
    </interactant>
    <organismsDiffer>false</organismsDiffer>
    <experiments>3</experiments>
</comment>
<comment type="interaction">
    <interactant intactId="EBI-744942">
        <id>Q12846</id>
    </interactant>
    <interactant intactId="EBI-12142299">
        <id>Q96IV6</id>
        <label>FAXDC2</label>
    </interactant>
    <organismsDiffer>false</organismsDiffer>
    <experiments>3</experiments>
</comment>
<comment type="interaction">
    <interactant intactId="EBI-744942">
        <id>Q12846</id>
    </interactant>
    <interactant intactId="EBI-6166686">
        <id>Q96F15</id>
        <label>GIMAP5</label>
    </interactant>
    <organismsDiffer>false</organismsDiffer>
    <experiments>3</experiments>
</comment>
<comment type="interaction">
    <interactant intactId="EBI-744942">
        <id>Q12846</id>
    </interactant>
    <interactant intactId="EBI-4401517">
        <id>O14653</id>
        <label>GOSR2</label>
    </interactant>
    <organismsDiffer>false</organismsDiffer>
    <experiments>6</experiments>
</comment>
<comment type="interaction">
    <interactant intactId="EBI-744942">
        <id>Q12846</id>
    </interactant>
    <interactant intactId="EBI-13345167">
        <id>Q8TDT2</id>
        <label>GPR152</label>
    </interactant>
    <organismsDiffer>false</organismsDiffer>
    <experiments>3</experiments>
</comment>
<comment type="interaction">
    <interactant intactId="EBI-744942">
        <id>Q12846</id>
    </interactant>
    <interactant intactId="EBI-749652">
        <id>P54920</id>
        <label>NAPA</label>
    </interactant>
    <organismsDiffer>false</organismsDiffer>
    <experiments>5</experiments>
</comment>
<comment type="interaction">
    <interactant intactId="EBI-744942">
        <id>Q12846</id>
    </interactant>
    <interactant intactId="EBI-3921185">
        <id>Q9H115</id>
        <label>NAPB</label>
    </interactant>
    <organismsDiffer>false</organismsDiffer>
    <experiments>6</experiments>
</comment>
<comment type="interaction">
    <interactant intactId="EBI-744942">
        <id>Q12846</id>
    </interactant>
    <interactant intactId="EBI-12188331">
        <id>P60201-2</id>
        <label>PLP1</label>
    </interactant>
    <organismsDiffer>false</organismsDiffer>
    <experiments>3</experiments>
</comment>
<comment type="interaction">
    <interactant intactId="EBI-744942">
        <id>Q12846</id>
    </interactant>
    <interactant intactId="EBI-348380">
        <id>P25788</id>
        <label>PSMA3</label>
    </interactant>
    <organismsDiffer>false</organismsDiffer>
    <experiments>3</experiments>
</comment>
<comment type="interaction">
    <interactant intactId="EBI-744942">
        <id>Q12846</id>
    </interactant>
    <interactant intactId="EBI-2340927">
        <id>P78317</id>
        <label>RNF4</label>
    </interactant>
    <organismsDiffer>false</organismsDiffer>
    <experiments>3</experiments>
</comment>
<comment type="interaction">
    <interactant intactId="EBI-744942">
        <id>Q12846</id>
    </interactant>
    <interactant intactId="EBI-8652744">
        <id>Q96IW7</id>
        <label>SEC22A</label>
    </interactant>
    <organismsDiffer>false</organismsDiffer>
    <experiments>6</experiments>
</comment>
<comment type="interaction">
    <interactant intactId="EBI-744942">
        <id>Q12846</id>
    </interactant>
    <interactant intactId="EBI-1058865">
        <id>O75396</id>
        <label>SEC22B</label>
    </interactant>
    <organismsDiffer>false</organismsDiffer>
    <experiments>4</experiments>
</comment>
<comment type="interaction">
    <interactant intactId="EBI-744942">
        <id>Q12846</id>
    </interactant>
    <interactant intactId="EBI-10329948">
        <id>Q9Y6X1</id>
        <label>SERP1</label>
    </interactant>
    <organismsDiffer>false</organismsDiffer>
    <experiments>3</experiments>
</comment>
<comment type="interaction">
    <interactant intactId="EBI-744942">
        <id>Q12846</id>
    </interactant>
    <interactant intactId="EBI-1046170">
        <id>O95470</id>
        <label>SGPL1</label>
    </interactant>
    <organismsDiffer>false</organismsDiffer>
    <experiments>3</experiments>
</comment>
<comment type="interaction">
    <interactant intactId="EBI-744942">
        <id>Q12846</id>
    </interactant>
    <interactant intactId="EBI-10244848">
        <id>Q5SQN1</id>
        <label>SNAP47</label>
    </interactant>
    <organismsDiffer>false</organismsDiffer>
    <experiments>3</experiments>
</comment>
<comment type="interaction">
    <interactant intactId="EBI-744942">
        <id>Q12846</id>
    </interactant>
    <interactant intactId="EBI-12094584">
        <id>O60499-2</id>
        <label>STX10</label>
    </interactant>
    <organismsDiffer>false</organismsDiffer>
    <experiments>3</experiments>
</comment>
<comment type="interaction">
    <interactant intactId="EBI-744942">
        <id>Q12846</id>
    </interactant>
    <interactant intactId="EBI-714135">
        <id>O75558</id>
        <label>STX11</label>
    </interactant>
    <organismsDiffer>false</organismsDiffer>
    <experiments>3</experiments>
</comment>
<comment type="interaction">
    <interactant intactId="EBI-744942">
        <id>Q12846</id>
    </interactant>
    <interactant intactId="EBI-2691717">
        <id>Q86Y82</id>
        <label>STX12</label>
    </interactant>
    <organismsDiffer>false</organismsDiffer>
    <experiments>9</experiments>
</comment>
<comment type="interaction">
    <interactant intactId="EBI-744942">
        <id>Q12846</id>
    </interactant>
    <interactant intactId="EBI-2853548">
        <id>O14662</id>
        <label>STX16</label>
    </interactant>
    <organismsDiffer>false</organismsDiffer>
    <experiments>3</experiments>
</comment>
<comment type="interaction">
    <interactant intactId="EBI-744942">
        <id>Q12846</id>
    </interactant>
    <interactant intactId="EBI-9089968">
        <id>O14662-5</id>
        <label>STX16</label>
    </interactant>
    <organismsDiffer>false</organismsDiffer>
    <experiments>3</experiments>
</comment>
<comment type="interaction">
    <interactant intactId="EBI-744942">
        <id>Q12846</id>
    </interactant>
    <interactant intactId="EBI-712466">
        <id>Q16623</id>
        <label>STX1A</label>
    </interactant>
    <organismsDiffer>false</organismsDiffer>
    <experiments>3</experiments>
</comment>
<comment type="interaction">
    <interactant intactId="EBI-744942">
        <id>Q12846</id>
    </interactant>
    <interactant intactId="EBI-9071709">
        <id>P61266</id>
        <label>STX1B</label>
    </interactant>
    <organismsDiffer>false</organismsDiffer>
    <experiments>3</experiments>
</comment>
<comment type="interaction">
    <interactant intactId="EBI-744942">
        <id>Q12846</id>
    </interactant>
    <interactant intactId="EBI-11956649">
        <id>P32856-2</id>
        <label>STX2</label>
    </interactant>
    <organismsDiffer>false</organismsDiffer>
    <experiments>4</experiments>
</comment>
<comment type="interaction">
    <interactant intactId="EBI-744942">
        <id>Q12846</id>
    </interactant>
    <interactant intactId="EBI-1394295">
        <id>Q13277</id>
        <label>STX3</label>
    </interactant>
    <organismsDiffer>false</organismsDiffer>
    <experiments>8</experiments>
</comment>
<comment type="interaction">
    <interactant intactId="EBI-744942">
        <id>Q12846</id>
    </interactant>
    <interactant intactId="EBI-714206">
        <id>Q13190</id>
        <label>STX5</label>
    </interactant>
    <organismsDiffer>false</organismsDiffer>
    <experiments>6</experiments>
</comment>
<comment type="interaction">
    <interactant intactId="EBI-744942">
        <id>Q12846</id>
    </interactant>
    <interactant intactId="EBI-2695795">
        <id>O43752</id>
        <label>STX6</label>
    </interactant>
    <organismsDiffer>false</organismsDiffer>
    <experiments>9</experiments>
</comment>
<comment type="interaction">
    <interactant intactId="EBI-744942">
        <id>Q12846</id>
    </interactant>
    <interactant intactId="EBI-3221827">
        <id>O15400</id>
        <label>STX7</label>
    </interactant>
    <organismsDiffer>false</organismsDiffer>
    <experiments>9</experiments>
</comment>
<comment type="interaction">
    <interactant intactId="EBI-744942">
        <id>Q12846</id>
    </interactant>
    <interactant intactId="EBI-727240">
        <id>Q9UNK0</id>
        <label>STX8</label>
    </interactant>
    <organismsDiffer>false</organismsDiffer>
    <experiments>8</experiments>
</comment>
<comment type="interaction">
    <interactant intactId="EBI-744942">
        <id>Q12846</id>
    </interactant>
    <interactant intactId="EBI-11955057">
        <id>Q8N8B7-2</id>
        <label>TCEANC</label>
    </interactant>
    <organismsDiffer>false</organismsDiffer>
    <experiments>3</experiments>
</comment>
<comment type="interaction">
    <interactant intactId="EBI-744942">
        <id>Q12846</id>
    </interactant>
    <interactant intactId="EBI-10265825">
        <id>Q8N511</id>
        <label>TMEM199</label>
    </interactant>
    <organismsDiffer>false</organismsDiffer>
    <experiments>3</experiments>
</comment>
<comment type="interaction">
    <interactant intactId="EBI-744942">
        <id>Q12846</id>
    </interactant>
    <interactant intactId="EBI-12274070">
        <id>Q969S6</id>
        <label>TMEM203</label>
    </interactant>
    <organismsDiffer>false</organismsDiffer>
    <experiments>3</experiments>
</comment>
<comment type="interaction">
    <interactant intactId="EBI-744942">
        <id>Q12846</id>
    </interactant>
    <interactant intactId="EBI-765817">
        <id>Q9Y228</id>
        <label>TRAF3IP3</label>
    </interactant>
    <organismsDiffer>false</organismsDiffer>
    <experiments>3</experiments>
</comment>
<comment type="interaction">
    <interactant intactId="EBI-744942">
        <id>Q12846</id>
    </interactant>
    <interactant intactId="EBI-742842">
        <id>Q9NZ43</id>
        <label>USE1</label>
    </interactant>
    <organismsDiffer>false</organismsDiffer>
    <experiments>3</experiments>
</comment>
<comment type="interaction">
    <interactant intactId="EBI-744942">
        <id>Q12846</id>
    </interactant>
    <interactant intactId="EBI-10201335">
        <id>P23763</id>
        <label>VAMP1</label>
    </interactant>
    <organismsDiffer>false</organismsDiffer>
    <experiments>3</experiments>
</comment>
<comment type="interaction">
    <interactant intactId="EBI-744942">
        <id>Q12846</id>
    </interactant>
    <interactant intactId="EBI-12097582">
        <id>P23763-3</id>
        <label>VAMP1</label>
    </interactant>
    <organismsDiffer>false</organismsDiffer>
    <experiments>3</experiments>
</comment>
<comment type="interaction">
    <interactant intactId="EBI-744942">
        <id>Q12846</id>
    </interactant>
    <interactant intactId="EBI-520113">
        <id>P63027</id>
        <label>VAMP2</label>
    </interactant>
    <organismsDiffer>false</organismsDiffer>
    <experiments>6</experiments>
</comment>
<comment type="interaction">
    <interactant intactId="EBI-744942">
        <id>Q12846</id>
    </interactant>
    <interactant intactId="EBI-722343">
        <id>Q15836</id>
        <label>VAMP3</label>
    </interactant>
    <organismsDiffer>false</organismsDiffer>
    <experiments>10</experiments>
</comment>
<comment type="interaction">
    <interactant intactId="EBI-744942">
        <id>Q12846</id>
    </interactant>
    <interactant intactId="EBI-744953">
        <id>O75379</id>
        <label>VAMP4</label>
    </interactant>
    <organismsDiffer>false</organismsDiffer>
    <experiments>8</experiments>
</comment>
<comment type="interaction">
    <interactant intactId="EBI-744942">
        <id>Q12846</id>
    </interactant>
    <interactant intactId="EBI-10187996">
        <id>O75379-2</id>
        <label>VAMP4</label>
    </interactant>
    <organismsDiffer>false</organismsDiffer>
    <experiments>4</experiments>
</comment>
<comment type="interaction">
    <interactant intactId="EBI-744942">
        <id>Q12846</id>
    </interactant>
    <interactant intactId="EBI-10191195">
        <id>O95183</id>
        <label>VAMP5</label>
    </interactant>
    <organismsDiffer>false</organismsDiffer>
    <experiments>9</experiments>
</comment>
<comment type="interaction">
    <interactant intactId="EBI-744942">
        <id>Q12846</id>
    </interactant>
    <interactant intactId="EBI-723716">
        <id>Q9UEU0</id>
        <label>VTI1B</label>
    </interactant>
    <organismsDiffer>false</organismsDiffer>
    <experiments>6</experiments>
</comment>
<comment type="interaction">
    <interactant intactId="EBI-744942">
        <id>Q12846</id>
    </interactant>
    <interactant intactId="EBI-718439">
        <id>O95159</id>
        <label>ZFPL1</label>
    </interactant>
    <organismsDiffer>false</organismsDiffer>
    <experiments>3</experiments>
</comment>
<comment type="interaction">
    <interactant intactId="EBI-744942">
        <id>Q12846</id>
    </interactant>
    <interactant intactId="EBI-25475894">
        <id>P0DTC3</id>
        <label>3a</label>
    </interactant>
    <organismsDiffer>true</organismsDiffer>
    <experiments>4</experiments>
</comment>
<comment type="subcellular location">
    <subcellularLocation>
        <location evidence="3">Cell membrane</location>
        <topology evidence="10">Single-pass type IV membrane protein</topology>
    </subcellularLocation>
    <subcellularLocation>
        <location evidence="3">Cell projection</location>
        <location evidence="3">Neuron projection</location>
    </subcellularLocation>
    <subcellularLocation>
        <location evidence="2">Cell projection</location>
        <location evidence="2">Stereocilium</location>
    </subcellularLocation>
    <text evidence="3">Localizes to neurite tips in neuronal cells.</text>
</comment>
<comment type="alternative products">
    <event type="alternative splicing"/>
    <isoform>
        <id>Q12846-1</id>
        <name>1</name>
        <sequence type="displayed"/>
    </isoform>
    <isoform>
        <id>Q12846-2</id>
        <name>2</name>
        <sequence type="described" ref="VSP_054603"/>
    </isoform>
</comment>
<comment type="tissue specificity">
    <text evidence="7">Expressed in neutrophils and neutrophil-differentiated HL-60 cells. Expression in neutrophils increases with differentiation.</text>
</comment>
<comment type="disease" evidence="8">
    <disease id="DI-06863">
        <name>Deafness, autosomal recessive, 123</name>
        <acronym>DFNB123</acronym>
        <description>A form of non-syndromic deafness characterized by bilateral, severe to profound sensorineural hearing loss with onset in the first decade of life. Sensorineural hearing loss results from damage to the neural receptors of the inner ear, the nerve pathways to the brain, or the area of the brain that receives sound information.</description>
        <dbReference type="MIM" id="620745"/>
    </disease>
    <text>The disease is caused by variants affecting the gene represented in this entry.</text>
</comment>
<comment type="similarity">
    <text evidence="10">Belongs to the syntaxin family.</text>
</comment>
<name>STX4_HUMAN</name>
<dbReference type="EMBL" id="U07158">
    <property type="protein sequence ID" value="AAA20967.1"/>
    <property type="molecule type" value="mRNA"/>
</dbReference>
<dbReference type="EMBL" id="X85784">
    <property type="protein sequence ID" value="CAA59769.1"/>
    <property type="molecule type" value="mRNA"/>
</dbReference>
<dbReference type="EMBL" id="AJ000541">
    <property type="protein sequence ID" value="CAA04174.1"/>
    <property type="molecule type" value="mRNA"/>
</dbReference>
<dbReference type="EMBL" id="AF026007">
    <property type="protein sequence ID" value="AAB88810.1"/>
    <property type="molecule type" value="mRNA"/>
</dbReference>
<dbReference type="EMBL" id="AF318489">
    <property type="protein sequence ID" value="AAG40313.1"/>
    <property type="molecule type" value="Transcribed_RNA"/>
</dbReference>
<dbReference type="EMBL" id="BT007326">
    <property type="protein sequence ID" value="AAP35990.1"/>
    <property type="molecule type" value="mRNA"/>
</dbReference>
<dbReference type="EMBL" id="AK091833">
    <property type="protein sequence ID" value="BAG52424.1"/>
    <property type="molecule type" value="mRNA"/>
</dbReference>
<dbReference type="EMBL" id="AK315716">
    <property type="protein sequence ID" value="BAG38075.1"/>
    <property type="molecule type" value="mRNA"/>
</dbReference>
<dbReference type="EMBL" id="CR541806">
    <property type="protein sequence ID" value="CAG46605.1"/>
    <property type="molecule type" value="mRNA"/>
</dbReference>
<dbReference type="EMBL" id="AC135050">
    <property type="status" value="NOT_ANNOTATED_CDS"/>
    <property type="molecule type" value="Genomic_DNA"/>
</dbReference>
<dbReference type="EMBL" id="CH471192">
    <property type="protein sequence ID" value="EAW52176.1"/>
    <property type="molecule type" value="Genomic_DNA"/>
</dbReference>
<dbReference type="EMBL" id="CH471192">
    <property type="protein sequence ID" value="EAW52177.1"/>
    <property type="molecule type" value="Genomic_DNA"/>
</dbReference>
<dbReference type="EMBL" id="BC002436">
    <property type="protein sequence ID" value="AAH02436.1"/>
    <property type="molecule type" value="mRNA"/>
</dbReference>
<dbReference type="CCDS" id="CCDS10700.1">
    <molecule id="Q12846-1"/>
</dbReference>
<dbReference type="CCDS" id="CCDS61916.1">
    <molecule id="Q12846-2"/>
</dbReference>
<dbReference type="PIR" id="I38517">
    <property type="entry name" value="I38517"/>
</dbReference>
<dbReference type="PIR" id="S52726">
    <property type="entry name" value="S52726"/>
</dbReference>
<dbReference type="RefSeq" id="NP_001259025.1">
    <molecule id="Q12846-2"/>
    <property type="nucleotide sequence ID" value="NM_001272096.1"/>
</dbReference>
<dbReference type="RefSeq" id="NP_004595.2">
    <molecule id="Q12846-1"/>
    <property type="nucleotide sequence ID" value="NM_004604.4"/>
</dbReference>
<dbReference type="RefSeq" id="XP_054169759.1">
    <molecule id="Q12846-1"/>
    <property type="nucleotide sequence ID" value="XM_054313784.1"/>
</dbReference>
<dbReference type="SMR" id="Q12846"/>
<dbReference type="BioGRID" id="112679">
    <property type="interactions" value="431"/>
</dbReference>
<dbReference type="CORUM" id="Q12846"/>
<dbReference type="FunCoup" id="Q12846">
    <property type="interactions" value="790"/>
</dbReference>
<dbReference type="IntAct" id="Q12846">
    <property type="interactions" value="97"/>
</dbReference>
<dbReference type="MINT" id="Q12846"/>
<dbReference type="STRING" id="9606.ENSP00000317714"/>
<dbReference type="TCDB" id="1.F.1.1.1">
    <property type="family name" value="the synaptosomal vesicle fusion pore (svf-pore) family"/>
</dbReference>
<dbReference type="TCDB" id="8.A.91.1.12">
    <property type="family name" value="the syntaxin (syntaxin) family"/>
</dbReference>
<dbReference type="GlyGen" id="Q12846">
    <property type="glycosylation" value="1 site, 1 O-linked glycan (1 site)"/>
</dbReference>
<dbReference type="iPTMnet" id="Q12846"/>
<dbReference type="PhosphoSitePlus" id="Q12846"/>
<dbReference type="SwissPalm" id="Q12846"/>
<dbReference type="BioMuta" id="STX4"/>
<dbReference type="DMDM" id="3041737"/>
<dbReference type="OGP" id="Q12846"/>
<dbReference type="jPOST" id="Q12846"/>
<dbReference type="MassIVE" id="Q12846"/>
<dbReference type="PaxDb" id="9606-ENSP00000317714"/>
<dbReference type="PeptideAtlas" id="Q12846"/>
<dbReference type="ProteomicsDB" id="2361"/>
<dbReference type="ProteomicsDB" id="58981">
    <molecule id="Q12846-1"/>
</dbReference>
<dbReference type="Pumba" id="Q12846"/>
<dbReference type="Antibodypedia" id="732">
    <property type="antibodies" value="290 antibodies from 32 providers"/>
</dbReference>
<dbReference type="DNASU" id="6810"/>
<dbReference type="Ensembl" id="ENST00000313843.8">
    <molecule id="Q12846-1"/>
    <property type="protein sequence ID" value="ENSP00000317714.3"/>
    <property type="gene ID" value="ENSG00000103496.15"/>
</dbReference>
<dbReference type="Ensembl" id="ENST00000394998.5">
    <molecule id="Q12846-2"/>
    <property type="protein sequence ID" value="ENSP00000378447.1"/>
    <property type="gene ID" value="ENSG00000103496.15"/>
</dbReference>
<dbReference type="GeneID" id="6810"/>
<dbReference type="KEGG" id="hsa:6810"/>
<dbReference type="MANE-Select" id="ENST00000313843.8">
    <property type="protein sequence ID" value="ENSP00000317714.3"/>
    <property type="RefSeq nucleotide sequence ID" value="NM_004604.5"/>
    <property type="RefSeq protein sequence ID" value="NP_004595.2"/>
</dbReference>
<dbReference type="UCSC" id="uc002eak.5">
    <molecule id="Q12846-1"/>
    <property type="organism name" value="human"/>
</dbReference>
<dbReference type="AGR" id="HGNC:11439"/>
<dbReference type="CTD" id="6810"/>
<dbReference type="DisGeNET" id="6810"/>
<dbReference type="GeneCards" id="STX4"/>
<dbReference type="HGNC" id="HGNC:11439">
    <property type="gene designation" value="STX4"/>
</dbReference>
<dbReference type="HPA" id="ENSG00000103496">
    <property type="expression patterns" value="Low tissue specificity"/>
</dbReference>
<dbReference type="MalaCards" id="STX4"/>
<dbReference type="MIM" id="186591">
    <property type="type" value="gene"/>
</dbReference>
<dbReference type="MIM" id="620745">
    <property type="type" value="phenotype"/>
</dbReference>
<dbReference type="neXtProt" id="NX_Q12846"/>
<dbReference type="OpenTargets" id="ENSG00000103496"/>
<dbReference type="PharmGKB" id="PA36236"/>
<dbReference type="VEuPathDB" id="HostDB:ENSG00000103496"/>
<dbReference type="eggNOG" id="KOG0810">
    <property type="taxonomic scope" value="Eukaryota"/>
</dbReference>
<dbReference type="GeneTree" id="ENSGT01030000234627"/>
<dbReference type="HOGENOM" id="CLU_042423_2_2_1"/>
<dbReference type="InParanoid" id="Q12846"/>
<dbReference type="OMA" id="WIAICCA"/>
<dbReference type="OrthoDB" id="10255013at2759"/>
<dbReference type="PAN-GO" id="Q12846">
    <property type="GO annotations" value="12 GO annotations based on evolutionary models"/>
</dbReference>
<dbReference type="PhylomeDB" id="Q12846"/>
<dbReference type="TreeFam" id="TF313763"/>
<dbReference type="PathwayCommons" id="Q12846"/>
<dbReference type="Reactome" id="R-HSA-114516">
    <property type="pathway name" value="Disinhibition of SNARE formation"/>
</dbReference>
<dbReference type="Reactome" id="R-HSA-1236974">
    <property type="pathway name" value="ER-Phagosome pathway"/>
</dbReference>
<dbReference type="Reactome" id="R-HSA-1445148">
    <property type="pathway name" value="Translocation of SLC2A4 (GLUT4) to the plasma membrane"/>
</dbReference>
<dbReference type="Reactome" id="R-HSA-199992">
    <property type="pathway name" value="trans-Golgi Network Vesicle Budding"/>
</dbReference>
<dbReference type="Reactome" id="R-HSA-449836">
    <property type="pathway name" value="Other interleukin signaling"/>
</dbReference>
<dbReference type="SignaLink" id="Q12846"/>
<dbReference type="SIGNOR" id="Q12846"/>
<dbReference type="BioGRID-ORCS" id="6810">
    <property type="hits" value="228 hits in 1172 CRISPR screens"/>
</dbReference>
<dbReference type="CD-CODE" id="FB4E32DD">
    <property type="entry name" value="Presynaptic clusters and postsynaptic densities"/>
</dbReference>
<dbReference type="ChiTaRS" id="STX4">
    <property type="organism name" value="human"/>
</dbReference>
<dbReference type="GeneWiki" id="STX4"/>
<dbReference type="GenomeRNAi" id="6810"/>
<dbReference type="Pharos" id="Q12846">
    <property type="development level" value="Tbio"/>
</dbReference>
<dbReference type="PRO" id="PR:Q12846"/>
<dbReference type="Proteomes" id="UP000005640">
    <property type="component" value="Chromosome 16"/>
</dbReference>
<dbReference type="RNAct" id="Q12846">
    <property type="molecule type" value="protein"/>
</dbReference>
<dbReference type="Bgee" id="ENSG00000103496">
    <property type="expression patterns" value="Expressed in C1 segment of cervical spinal cord and 195 other cell types or tissues"/>
</dbReference>
<dbReference type="ExpressionAtlas" id="Q12846">
    <property type="expression patterns" value="baseline and differential"/>
</dbReference>
<dbReference type="GO" id="GO:0016323">
    <property type="term" value="C:basolateral plasma membrane"/>
    <property type="evidence" value="ECO:0000314"/>
    <property type="project" value="HGNC-UCL"/>
</dbReference>
<dbReference type="GO" id="GO:0009986">
    <property type="term" value="C:cell surface"/>
    <property type="evidence" value="ECO:0000314"/>
    <property type="project" value="UniProtKB"/>
</dbReference>
<dbReference type="GO" id="GO:0005829">
    <property type="term" value="C:cytosol"/>
    <property type="evidence" value="ECO:0000304"/>
    <property type="project" value="Reactome"/>
</dbReference>
<dbReference type="GO" id="GO:0043197">
    <property type="term" value="C:dendritic spine"/>
    <property type="evidence" value="ECO:0000314"/>
    <property type="project" value="UniProtKB"/>
</dbReference>
<dbReference type="GO" id="GO:0012505">
    <property type="term" value="C:endomembrane system"/>
    <property type="evidence" value="ECO:0000318"/>
    <property type="project" value="GO_Central"/>
</dbReference>
<dbReference type="GO" id="GO:0005768">
    <property type="term" value="C:endosome"/>
    <property type="evidence" value="ECO:0000314"/>
    <property type="project" value="UniProtKB"/>
</dbReference>
<dbReference type="GO" id="GO:0070062">
    <property type="term" value="C:extracellular exosome"/>
    <property type="evidence" value="ECO:0007005"/>
    <property type="project" value="UniProtKB"/>
</dbReference>
<dbReference type="GO" id="GO:0005615">
    <property type="term" value="C:extracellular space"/>
    <property type="evidence" value="ECO:0000314"/>
    <property type="project" value="UniProtKB"/>
</dbReference>
<dbReference type="GO" id="GO:0098978">
    <property type="term" value="C:glutamatergic synapse"/>
    <property type="evidence" value="ECO:0000314"/>
    <property type="project" value="SynGO"/>
</dbReference>
<dbReference type="GO" id="GO:0030027">
    <property type="term" value="C:lamellipodium"/>
    <property type="evidence" value="ECO:0000314"/>
    <property type="project" value="UniProtKB"/>
</dbReference>
<dbReference type="GO" id="GO:0043219">
    <property type="term" value="C:lateral loop"/>
    <property type="evidence" value="ECO:0007669"/>
    <property type="project" value="Ensembl"/>
</dbReference>
<dbReference type="GO" id="GO:0016020">
    <property type="term" value="C:membrane"/>
    <property type="evidence" value="ECO:0000314"/>
    <property type="project" value="UniProtKB"/>
</dbReference>
<dbReference type="GO" id="GO:0035749">
    <property type="term" value="C:myelin sheath adaxonal region"/>
    <property type="evidence" value="ECO:0007669"/>
    <property type="project" value="Ensembl"/>
</dbReference>
<dbReference type="GO" id="GO:0032589">
    <property type="term" value="C:neuron projection membrane"/>
    <property type="evidence" value="ECO:0000250"/>
    <property type="project" value="UniProtKB"/>
</dbReference>
<dbReference type="GO" id="GO:0048471">
    <property type="term" value="C:perinuclear region of cytoplasm"/>
    <property type="evidence" value="ECO:0007669"/>
    <property type="project" value="Ensembl"/>
</dbReference>
<dbReference type="GO" id="GO:0030670">
    <property type="term" value="C:phagocytic vesicle membrane"/>
    <property type="evidence" value="ECO:0000304"/>
    <property type="project" value="Reactome"/>
</dbReference>
<dbReference type="GO" id="GO:0005886">
    <property type="term" value="C:plasma membrane"/>
    <property type="evidence" value="ECO:0000314"/>
    <property type="project" value="HPA"/>
</dbReference>
<dbReference type="GO" id="GO:0098794">
    <property type="term" value="C:postsynapse"/>
    <property type="evidence" value="ECO:0000314"/>
    <property type="project" value="SynGO"/>
</dbReference>
<dbReference type="GO" id="GO:0098685">
    <property type="term" value="C:Schaffer collateral - CA1 synapse"/>
    <property type="evidence" value="ECO:0007669"/>
    <property type="project" value="Ensembl"/>
</dbReference>
<dbReference type="GO" id="GO:0031201">
    <property type="term" value="C:SNARE complex"/>
    <property type="evidence" value="ECO:0000314"/>
    <property type="project" value="UniProtKB"/>
</dbReference>
<dbReference type="GO" id="GO:0036477">
    <property type="term" value="C:somatodendritic compartment"/>
    <property type="evidence" value="ECO:0000314"/>
    <property type="project" value="UniProtKB"/>
</dbReference>
<dbReference type="GO" id="GO:0042581">
    <property type="term" value="C:specific granule"/>
    <property type="evidence" value="ECO:0000314"/>
    <property type="project" value="UniProtKB"/>
</dbReference>
<dbReference type="GO" id="GO:0032420">
    <property type="term" value="C:stereocilium"/>
    <property type="evidence" value="ECO:0000250"/>
    <property type="project" value="UniProtKB"/>
</dbReference>
<dbReference type="GO" id="GO:0000322">
    <property type="term" value="C:storage vacuole"/>
    <property type="evidence" value="ECO:0007669"/>
    <property type="project" value="Ensembl"/>
</dbReference>
<dbReference type="GO" id="GO:0045202">
    <property type="term" value="C:synapse"/>
    <property type="evidence" value="ECO:0000314"/>
    <property type="project" value="UniProtKB"/>
</dbReference>
<dbReference type="GO" id="GO:0005802">
    <property type="term" value="C:trans-Golgi network"/>
    <property type="evidence" value="ECO:0007669"/>
    <property type="project" value="Ensembl"/>
</dbReference>
<dbReference type="GO" id="GO:0005773">
    <property type="term" value="C:vacuole"/>
    <property type="evidence" value="ECO:0000304"/>
    <property type="project" value="HGNC-UCL"/>
</dbReference>
<dbReference type="GO" id="GO:0005484">
    <property type="term" value="F:SNAP receptor activity"/>
    <property type="evidence" value="ECO:0000318"/>
    <property type="project" value="GO_Central"/>
</dbReference>
<dbReference type="GO" id="GO:0000149">
    <property type="term" value="F:SNARE binding"/>
    <property type="evidence" value="ECO:0000318"/>
    <property type="project" value="GO_Central"/>
</dbReference>
<dbReference type="GO" id="GO:0016230">
    <property type="term" value="F:sphingomyelin phosphodiesterase activator activity"/>
    <property type="evidence" value="ECO:0000315"/>
    <property type="project" value="UniProtKB"/>
</dbReference>
<dbReference type="GO" id="GO:0034599">
    <property type="term" value="P:cellular response to oxidative stress"/>
    <property type="evidence" value="ECO:0000314"/>
    <property type="project" value="UniProtKB"/>
</dbReference>
<dbReference type="GO" id="GO:0071346">
    <property type="term" value="P:cellular response to type II interferon"/>
    <property type="evidence" value="ECO:0007669"/>
    <property type="project" value="Ensembl"/>
</dbReference>
<dbReference type="GO" id="GO:1903575">
    <property type="term" value="P:cornified envelope assembly"/>
    <property type="evidence" value="ECO:0000314"/>
    <property type="project" value="UniProtKB"/>
</dbReference>
<dbReference type="GO" id="GO:0006887">
    <property type="term" value="P:exocytosis"/>
    <property type="evidence" value="ECO:0000318"/>
    <property type="project" value="GO_Central"/>
</dbReference>
<dbReference type="GO" id="GO:0006886">
    <property type="term" value="P:intracellular protein transport"/>
    <property type="evidence" value="ECO:0000318"/>
    <property type="project" value="GO_Central"/>
</dbReference>
<dbReference type="GO" id="GO:0060291">
    <property type="term" value="P:long-term synaptic potentiation"/>
    <property type="evidence" value="ECO:0000314"/>
    <property type="project" value="UniProtKB"/>
</dbReference>
<dbReference type="GO" id="GO:0006836">
    <property type="term" value="P:neurotransmitter transport"/>
    <property type="evidence" value="ECO:0007669"/>
    <property type="project" value="UniProtKB-KW"/>
</dbReference>
<dbReference type="GO" id="GO:0048284">
    <property type="term" value="P:organelle fusion"/>
    <property type="evidence" value="ECO:0000314"/>
    <property type="project" value="UniProtKB"/>
</dbReference>
<dbReference type="GO" id="GO:0043085">
    <property type="term" value="P:positive regulation of catalytic activity"/>
    <property type="evidence" value="ECO:0000315"/>
    <property type="project" value="UniProtKB"/>
</dbReference>
<dbReference type="GO" id="GO:0045785">
    <property type="term" value="P:positive regulation of cell adhesion"/>
    <property type="evidence" value="ECO:0000315"/>
    <property type="project" value="UniProtKB"/>
</dbReference>
<dbReference type="GO" id="GO:0030335">
    <property type="term" value="P:positive regulation of cell migration"/>
    <property type="evidence" value="ECO:0000315"/>
    <property type="project" value="UniProtKB"/>
</dbReference>
<dbReference type="GO" id="GO:0008284">
    <property type="term" value="P:positive regulation of cell population proliferation"/>
    <property type="evidence" value="ECO:0000315"/>
    <property type="project" value="UniProtKB"/>
</dbReference>
<dbReference type="GO" id="GO:0050921">
    <property type="term" value="P:positive regulation of chemotaxis"/>
    <property type="evidence" value="ECO:0000315"/>
    <property type="project" value="UniProtKB"/>
</dbReference>
<dbReference type="GO" id="GO:0043311">
    <property type="term" value="P:positive regulation of eosinophil degranulation"/>
    <property type="evidence" value="ECO:0000315"/>
    <property type="project" value="UniProtKB"/>
</dbReference>
<dbReference type="GO" id="GO:0002639">
    <property type="term" value="P:positive regulation of immunoglobulin production"/>
    <property type="evidence" value="ECO:0000315"/>
    <property type="project" value="UniProtKB"/>
</dbReference>
<dbReference type="GO" id="GO:0035774">
    <property type="term" value="P:positive regulation of insulin secretion involved in cellular response to glucose stimulus"/>
    <property type="evidence" value="ECO:0000314"/>
    <property type="project" value="UniProtKB"/>
</dbReference>
<dbReference type="GO" id="GO:2000010">
    <property type="term" value="P:positive regulation of protein localization to cell surface"/>
    <property type="evidence" value="ECO:0000315"/>
    <property type="project" value="UniProtKB"/>
</dbReference>
<dbReference type="GO" id="GO:1903078">
    <property type="term" value="P:positive regulation of protein localization to plasma membrane"/>
    <property type="evidence" value="ECO:0000315"/>
    <property type="project" value="UniProtKB"/>
</dbReference>
<dbReference type="GO" id="GO:0034394">
    <property type="term" value="P:protein localization to cell surface"/>
    <property type="evidence" value="ECO:0000250"/>
    <property type="project" value="UniProtKB"/>
</dbReference>
<dbReference type="GO" id="GO:0017157">
    <property type="term" value="P:regulation of exocytosis"/>
    <property type="evidence" value="ECO:0000315"/>
    <property type="project" value="UniProtKB"/>
</dbReference>
<dbReference type="GO" id="GO:1902041">
    <property type="term" value="P:regulation of extrinsic apoptotic signaling pathway via death domain receptors"/>
    <property type="evidence" value="ECO:0000315"/>
    <property type="project" value="UniProtKB"/>
</dbReference>
<dbReference type="GO" id="GO:0099072">
    <property type="term" value="P:regulation of postsynaptic membrane neurotransmitter receptor levels"/>
    <property type="evidence" value="ECO:0007669"/>
    <property type="project" value="Ensembl"/>
</dbReference>
<dbReference type="GO" id="GO:0007605">
    <property type="term" value="P:sensory perception of sound"/>
    <property type="evidence" value="ECO:0000315"/>
    <property type="project" value="UniProtKB"/>
</dbReference>
<dbReference type="GO" id="GO:0035493">
    <property type="term" value="P:SNARE complex assembly"/>
    <property type="evidence" value="ECO:0007669"/>
    <property type="project" value="Ensembl"/>
</dbReference>
<dbReference type="GO" id="GO:0048278">
    <property type="term" value="P:vesicle docking"/>
    <property type="evidence" value="ECO:0000318"/>
    <property type="project" value="GO_Central"/>
</dbReference>
<dbReference type="GO" id="GO:0006906">
    <property type="term" value="P:vesicle fusion"/>
    <property type="evidence" value="ECO:0000318"/>
    <property type="project" value="GO_Central"/>
</dbReference>
<dbReference type="CDD" id="cd15883">
    <property type="entry name" value="SNARE_syntaxin4"/>
    <property type="match status" value="1"/>
</dbReference>
<dbReference type="CDD" id="cd00179">
    <property type="entry name" value="SynN"/>
    <property type="match status" value="1"/>
</dbReference>
<dbReference type="FunFam" id="1.20.5.110:FF:000045">
    <property type="entry name" value="Syntaxin 4"/>
    <property type="match status" value="1"/>
</dbReference>
<dbReference type="FunFam" id="1.20.58.70:FF:000011">
    <property type="entry name" value="Syntaxin 4"/>
    <property type="match status" value="1"/>
</dbReference>
<dbReference type="Gene3D" id="1.20.5.110">
    <property type="match status" value="1"/>
</dbReference>
<dbReference type="Gene3D" id="1.20.58.70">
    <property type="match status" value="1"/>
</dbReference>
<dbReference type="InterPro" id="IPR010989">
    <property type="entry name" value="SNARE"/>
</dbReference>
<dbReference type="InterPro" id="IPR045242">
    <property type="entry name" value="Syntaxin"/>
</dbReference>
<dbReference type="InterPro" id="IPR006012">
    <property type="entry name" value="Syntaxin/epimorphin_CS"/>
</dbReference>
<dbReference type="InterPro" id="IPR006011">
    <property type="entry name" value="Syntaxin_N"/>
</dbReference>
<dbReference type="InterPro" id="IPR000727">
    <property type="entry name" value="T_SNARE_dom"/>
</dbReference>
<dbReference type="PANTHER" id="PTHR19957">
    <property type="entry name" value="SYNTAXIN"/>
    <property type="match status" value="1"/>
</dbReference>
<dbReference type="PANTHER" id="PTHR19957:SF97">
    <property type="entry name" value="SYNTAXIN-4"/>
    <property type="match status" value="1"/>
</dbReference>
<dbReference type="Pfam" id="PF05739">
    <property type="entry name" value="SNARE"/>
    <property type="match status" value="1"/>
</dbReference>
<dbReference type="Pfam" id="PF00804">
    <property type="entry name" value="Syntaxin"/>
    <property type="match status" value="1"/>
</dbReference>
<dbReference type="SMART" id="SM00503">
    <property type="entry name" value="SynN"/>
    <property type="match status" value="1"/>
</dbReference>
<dbReference type="SMART" id="SM00397">
    <property type="entry name" value="t_SNARE"/>
    <property type="match status" value="1"/>
</dbReference>
<dbReference type="SUPFAM" id="SSF47661">
    <property type="entry name" value="t-snare proteins"/>
    <property type="match status" value="1"/>
</dbReference>
<dbReference type="PROSITE" id="PS00914">
    <property type="entry name" value="SYNTAXIN"/>
    <property type="match status" value="1"/>
</dbReference>
<dbReference type="PROSITE" id="PS50192">
    <property type="entry name" value="T_SNARE"/>
    <property type="match status" value="1"/>
</dbReference>
<feature type="chain" id="PRO_0000210202" description="Syntaxin-4">
    <location>
        <begin position="1"/>
        <end position="297"/>
    </location>
</feature>
<feature type="topological domain" description="Cytoplasmic" evidence="4">
    <location>
        <begin position="1"/>
        <end position="275"/>
    </location>
</feature>
<feature type="transmembrane region" description="Helical; Anchor for type IV membrane protein" evidence="4">
    <location>
        <begin position="276"/>
        <end position="296"/>
    </location>
</feature>
<feature type="topological domain" description="Extracellular" evidence="4">
    <location>
        <position position="297"/>
    </location>
</feature>
<feature type="domain" description="t-SNARE coiled-coil homology" evidence="5">
    <location>
        <begin position="200"/>
        <end position="262"/>
    </location>
</feature>
<feature type="region of interest" description="Disordered" evidence="6">
    <location>
        <begin position="1"/>
        <end position="21"/>
    </location>
</feature>
<feature type="region of interest" description="Interaction with CENPF" evidence="1">
    <location>
        <begin position="154"/>
        <end position="297"/>
    </location>
</feature>
<feature type="coiled-coil region" evidence="4">
    <location>
        <begin position="43"/>
        <end position="163"/>
    </location>
</feature>
<feature type="compositionally biased region" description="Basic and acidic residues" evidence="6">
    <location>
        <begin position="1"/>
        <end position="12"/>
    </location>
</feature>
<feature type="site" description="Required for neurite tip localization" evidence="3">
    <location>
        <position position="290"/>
    </location>
</feature>
<feature type="modified residue" description="Phosphoserine" evidence="11 12 14">
    <location>
        <position position="14"/>
    </location>
</feature>
<feature type="modified residue" description="Phosphoserine" evidence="11 12 14">
    <location>
        <position position="15"/>
    </location>
</feature>
<feature type="modified residue" description="Phosphothreonine" evidence="13">
    <location>
        <position position="31"/>
    </location>
</feature>
<feature type="modified residue" description="Phosphoserine" evidence="13">
    <location>
        <position position="36"/>
    </location>
</feature>
<feature type="modified residue" description="Phosphoserine" evidence="11 13">
    <location>
        <position position="117"/>
    </location>
</feature>
<feature type="modified residue" description="Phosphoserine" evidence="2">
    <location>
        <position position="208"/>
    </location>
</feature>
<feature type="modified residue" description="Phosphoserine" evidence="2">
    <location>
        <position position="248"/>
    </location>
</feature>
<feature type="splice variant" id="VSP_054603" description="In isoform 2." evidence="9">
    <original>MRDRTHELRQGDDSSDEEDKERVALVVHPGTARLGSPDEEFFHK</original>
    <variation>MGMTARTKRTRSGSRWWCTRARHGWGARTRSSSTSPLGHPPQ</variation>
    <location>
        <begin position="1"/>
        <end position="44"/>
    </location>
</feature>
<feature type="sequence conflict" description="In Ref. 1; AAA20967." evidence="10" ref="1">
    <original>E</original>
    <variation>D</variation>
    <location>
        <position position="174"/>
    </location>
</feature>
<feature type="sequence conflict" description="In Ref. 1; AAA20967." evidence="10" ref="1">
    <original>A</original>
    <variation>V</variation>
    <location>
        <position position="269"/>
    </location>
</feature>
<reference key="1">
    <citation type="journal article" date="1994" name="Gene">
        <title>Isolation and sequence analysis of the human syntaxin-encoding gene.</title>
        <authorList>
            <person name="Li H."/>
            <person name="Hodge D.R."/>
            <person name="Pei G.K."/>
            <person name="Seth A."/>
        </authorList>
    </citation>
    <scope>NUCLEOTIDE SEQUENCE [MRNA] (ISOFORM 1)</scope>
    <source>
        <tissue>Placenta</tissue>
    </source>
</reference>
<reference key="2">
    <citation type="journal article" date="1996" name="Biochem. J.">
        <title>Insulin-responsive tissues contain the core complex protein SNAP-25 (synaptosomal-associated protein 25) A and B isoforms in addition to syntaxin 4 and synaptobrevins 1 and 2.</title>
        <authorList>
            <person name="Jagadish M.N."/>
            <person name="Fernandez C.S."/>
            <person name="Hewish D.R."/>
            <person name="Macaulay S.L."/>
            <person name="Gough K.H."/>
            <person name="Grusovin J."/>
            <person name="Verkuylen A."/>
            <person name="Cosgrove L."/>
            <person name="Alafaci A."/>
            <person name="Frenkel M.J."/>
            <person name="Ward C.W."/>
        </authorList>
    </citation>
    <scope>NUCLEOTIDE SEQUENCE [MRNA] (ISOFORM 1)</scope>
    <source>
        <tissue>Skeletal muscle</tissue>
    </source>
</reference>
<reference key="3">
    <citation type="journal article" date="1999" name="J. Leukoc. Biol.">
        <title>Co-expression of several human syntaxin genes in neutrophils and differentiating HL-60 cells: variant isoforms and detection of syntaxin 1.</title>
        <authorList>
            <person name="Martin-Martin B."/>
            <person name="Nabokina S.M."/>
            <person name="Lazo P.A."/>
            <person name="Mollinedo F."/>
        </authorList>
    </citation>
    <scope>NUCLEOTIDE SEQUENCE [MRNA] (ISOFORM 1)</scope>
    <scope>TISSUE SPECIFICITY</scope>
    <source>
        <tissue>Peripheral blood neutrophil</tissue>
    </source>
</reference>
<reference key="4">
    <citation type="submission" date="1997-09" db="EMBL/GenBank/DDBJ databases">
        <authorList>
            <person name="Rae J.L."/>
            <person name="Shepard A.R."/>
        </authorList>
    </citation>
    <scope>NUCLEOTIDE SEQUENCE [MRNA] (ISOFORM 1)</scope>
    <source>
        <tissue>Lens epithelium</tissue>
    </source>
</reference>
<reference key="5">
    <citation type="submission" date="2000-10" db="EMBL/GenBank/DDBJ databases">
        <title>Expression of syntaxins in kidney MDCK cells.</title>
        <authorList>
            <person name="Zhang Z."/>
            <person name="Loh E."/>
            <person name="Low S.H."/>
            <person name="Li X."/>
            <person name="Miura M."/>
            <person name="An F."/>
            <person name="Weimbs T."/>
        </authorList>
    </citation>
    <scope>NUCLEOTIDE SEQUENCE [MRNA] (ISOFORM 1)</scope>
</reference>
<reference key="6">
    <citation type="submission" date="2003-05" db="EMBL/GenBank/DDBJ databases">
        <title>Cloning of human full-length CDSs in BD Creator(TM) system donor vector.</title>
        <authorList>
            <person name="Kalnine N."/>
            <person name="Chen X."/>
            <person name="Rolfs A."/>
            <person name="Halleck A."/>
            <person name="Hines L."/>
            <person name="Eisenstein S."/>
            <person name="Koundinya M."/>
            <person name="Raphael J."/>
            <person name="Moreira D."/>
            <person name="Kelley T."/>
            <person name="LaBaer J."/>
            <person name="Lin Y."/>
            <person name="Phelan M."/>
            <person name="Farmer A."/>
        </authorList>
    </citation>
    <scope>NUCLEOTIDE SEQUENCE [LARGE SCALE MRNA] (ISOFORM 1)</scope>
</reference>
<reference key="7">
    <citation type="journal article" date="2004" name="Nat. Genet.">
        <title>Complete sequencing and characterization of 21,243 full-length human cDNAs.</title>
        <authorList>
            <person name="Ota T."/>
            <person name="Suzuki Y."/>
            <person name="Nishikawa T."/>
            <person name="Otsuki T."/>
            <person name="Sugiyama T."/>
            <person name="Irie R."/>
            <person name="Wakamatsu A."/>
            <person name="Hayashi K."/>
            <person name="Sato H."/>
            <person name="Nagai K."/>
            <person name="Kimura K."/>
            <person name="Makita H."/>
            <person name="Sekine M."/>
            <person name="Obayashi M."/>
            <person name="Nishi T."/>
            <person name="Shibahara T."/>
            <person name="Tanaka T."/>
            <person name="Ishii S."/>
            <person name="Yamamoto J."/>
            <person name="Saito K."/>
            <person name="Kawai Y."/>
            <person name="Isono Y."/>
            <person name="Nakamura Y."/>
            <person name="Nagahari K."/>
            <person name="Murakami K."/>
            <person name="Yasuda T."/>
            <person name="Iwayanagi T."/>
            <person name="Wagatsuma M."/>
            <person name="Shiratori A."/>
            <person name="Sudo H."/>
            <person name="Hosoiri T."/>
            <person name="Kaku Y."/>
            <person name="Kodaira H."/>
            <person name="Kondo H."/>
            <person name="Sugawara M."/>
            <person name="Takahashi M."/>
            <person name="Kanda K."/>
            <person name="Yokoi T."/>
            <person name="Furuya T."/>
            <person name="Kikkawa E."/>
            <person name="Omura Y."/>
            <person name="Abe K."/>
            <person name="Kamihara K."/>
            <person name="Katsuta N."/>
            <person name="Sato K."/>
            <person name="Tanikawa M."/>
            <person name="Yamazaki M."/>
            <person name="Ninomiya K."/>
            <person name="Ishibashi T."/>
            <person name="Yamashita H."/>
            <person name="Murakawa K."/>
            <person name="Fujimori K."/>
            <person name="Tanai H."/>
            <person name="Kimata M."/>
            <person name="Watanabe M."/>
            <person name="Hiraoka S."/>
            <person name="Chiba Y."/>
            <person name="Ishida S."/>
            <person name="Ono Y."/>
            <person name="Takiguchi S."/>
            <person name="Watanabe S."/>
            <person name="Yosida M."/>
            <person name="Hotuta T."/>
            <person name="Kusano J."/>
            <person name="Kanehori K."/>
            <person name="Takahashi-Fujii A."/>
            <person name="Hara H."/>
            <person name="Tanase T.-O."/>
            <person name="Nomura Y."/>
            <person name="Togiya S."/>
            <person name="Komai F."/>
            <person name="Hara R."/>
            <person name="Takeuchi K."/>
            <person name="Arita M."/>
            <person name="Imose N."/>
            <person name="Musashino K."/>
            <person name="Yuuki H."/>
            <person name="Oshima A."/>
            <person name="Sasaki N."/>
            <person name="Aotsuka S."/>
            <person name="Yoshikawa Y."/>
            <person name="Matsunawa H."/>
            <person name="Ichihara T."/>
            <person name="Shiohata N."/>
            <person name="Sano S."/>
            <person name="Moriya S."/>
            <person name="Momiyama H."/>
            <person name="Satoh N."/>
            <person name="Takami S."/>
            <person name="Terashima Y."/>
            <person name="Suzuki O."/>
            <person name="Nakagawa S."/>
            <person name="Senoh A."/>
            <person name="Mizoguchi H."/>
            <person name="Goto Y."/>
            <person name="Shimizu F."/>
            <person name="Wakebe H."/>
            <person name="Hishigaki H."/>
            <person name="Watanabe T."/>
            <person name="Sugiyama A."/>
            <person name="Takemoto M."/>
            <person name="Kawakami B."/>
            <person name="Yamazaki M."/>
            <person name="Watanabe K."/>
            <person name="Kumagai A."/>
            <person name="Itakura S."/>
            <person name="Fukuzumi Y."/>
            <person name="Fujimori Y."/>
            <person name="Komiyama M."/>
            <person name="Tashiro H."/>
            <person name="Tanigami A."/>
            <person name="Fujiwara T."/>
            <person name="Ono T."/>
            <person name="Yamada K."/>
            <person name="Fujii Y."/>
            <person name="Ozaki K."/>
            <person name="Hirao M."/>
            <person name="Ohmori Y."/>
            <person name="Kawabata A."/>
            <person name="Hikiji T."/>
            <person name="Kobatake N."/>
            <person name="Inagaki H."/>
            <person name="Ikema Y."/>
            <person name="Okamoto S."/>
            <person name="Okitani R."/>
            <person name="Kawakami T."/>
            <person name="Noguchi S."/>
            <person name="Itoh T."/>
            <person name="Shigeta K."/>
            <person name="Senba T."/>
            <person name="Matsumura K."/>
            <person name="Nakajima Y."/>
            <person name="Mizuno T."/>
            <person name="Morinaga M."/>
            <person name="Sasaki M."/>
            <person name="Togashi T."/>
            <person name="Oyama M."/>
            <person name="Hata H."/>
            <person name="Watanabe M."/>
            <person name="Komatsu T."/>
            <person name="Mizushima-Sugano J."/>
            <person name="Satoh T."/>
            <person name="Shirai Y."/>
            <person name="Takahashi Y."/>
            <person name="Nakagawa K."/>
            <person name="Okumura K."/>
            <person name="Nagase T."/>
            <person name="Nomura N."/>
            <person name="Kikuchi H."/>
            <person name="Masuho Y."/>
            <person name="Yamashita R."/>
            <person name="Nakai K."/>
            <person name="Yada T."/>
            <person name="Nakamura Y."/>
            <person name="Ohara O."/>
            <person name="Isogai T."/>
            <person name="Sugano S."/>
        </authorList>
    </citation>
    <scope>NUCLEOTIDE SEQUENCE [LARGE SCALE MRNA] (ISOFORMS 1 AND 2)</scope>
    <source>
        <tissue>Lung</tissue>
        <tissue>Testis</tissue>
    </source>
</reference>
<reference key="8">
    <citation type="submission" date="2004-06" db="EMBL/GenBank/DDBJ databases">
        <title>Cloning of human full open reading frames in Gateway(TM) system entry vector (pDONR201).</title>
        <authorList>
            <person name="Ebert L."/>
            <person name="Schick M."/>
            <person name="Neubert P."/>
            <person name="Schatten R."/>
            <person name="Henze S."/>
            <person name="Korn B."/>
        </authorList>
    </citation>
    <scope>NUCLEOTIDE SEQUENCE [LARGE SCALE MRNA] (ISOFORM 1)</scope>
</reference>
<reference key="9">
    <citation type="journal article" date="2004" name="Nature">
        <title>The sequence and analysis of duplication-rich human chromosome 16.</title>
        <authorList>
            <person name="Martin J."/>
            <person name="Han C."/>
            <person name="Gordon L.A."/>
            <person name="Terry A."/>
            <person name="Prabhakar S."/>
            <person name="She X."/>
            <person name="Xie G."/>
            <person name="Hellsten U."/>
            <person name="Chan Y.M."/>
            <person name="Altherr M."/>
            <person name="Couronne O."/>
            <person name="Aerts A."/>
            <person name="Bajorek E."/>
            <person name="Black S."/>
            <person name="Blumer H."/>
            <person name="Branscomb E."/>
            <person name="Brown N.C."/>
            <person name="Bruno W.J."/>
            <person name="Buckingham J.M."/>
            <person name="Callen D.F."/>
            <person name="Campbell C.S."/>
            <person name="Campbell M.L."/>
            <person name="Campbell E.W."/>
            <person name="Caoile C."/>
            <person name="Challacombe J.F."/>
            <person name="Chasteen L.A."/>
            <person name="Chertkov O."/>
            <person name="Chi H.C."/>
            <person name="Christensen M."/>
            <person name="Clark L.M."/>
            <person name="Cohn J.D."/>
            <person name="Denys M."/>
            <person name="Detter J.C."/>
            <person name="Dickson M."/>
            <person name="Dimitrijevic-Bussod M."/>
            <person name="Escobar J."/>
            <person name="Fawcett J.J."/>
            <person name="Flowers D."/>
            <person name="Fotopulos D."/>
            <person name="Glavina T."/>
            <person name="Gomez M."/>
            <person name="Gonzales E."/>
            <person name="Goodstein D."/>
            <person name="Goodwin L.A."/>
            <person name="Grady D.L."/>
            <person name="Grigoriev I."/>
            <person name="Groza M."/>
            <person name="Hammon N."/>
            <person name="Hawkins T."/>
            <person name="Haydu L."/>
            <person name="Hildebrand C.E."/>
            <person name="Huang W."/>
            <person name="Israni S."/>
            <person name="Jett J."/>
            <person name="Jewett P.B."/>
            <person name="Kadner K."/>
            <person name="Kimball H."/>
            <person name="Kobayashi A."/>
            <person name="Krawczyk M.-C."/>
            <person name="Leyba T."/>
            <person name="Longmire J.L."/>
            <person name="Lopez F."/>
            <person name="Lou Y."/>
            <person name="Lowry S."/>
            <person name="Ludeman T."/>
            <person name="Manohar C.F."/>
            <person name="Mark G.A."/>
            <person name="McMurray K.L."/>
            <person name="Meincke L.J."/>
            <person name="Morgan J."/>
            <person name="Moyzis R.K."/>
            <person name="Mundt M.O."/>
            <person name="Munk A.C."/>
            <person name="Nandkeshwar R.D."/>
            <person name="Pitluck S."/>
            <person name="Pollard M."/>
            <person name="Predki P."/>
            <person name="Parson-Quintana B."/>
            <person name="Ramirez L."/>
            <person name="Rash S."/>
            <person name="Retterer J."/>
            <person name="Ricke D.O."/>
            <person name="Robinson D.L."/>
            <person name="Rodriguez A."/>
            <person name="Salamov A."/>
            <person name="Saunders E.H."/>
            <person name="Scott D."/>
            <person name="Shough T."/>
            <person name="Stallings R.L."/>
            <person name="Stalvey M."/>
            <person name="Sutherland R.D."/>
            <person name="Tapia R."/>
            <person name="Tesmer J.G."/>
            <person name="Thayer N."/>
            <person name="Thompson L.S."/>
            <person name="Tice H."/>
            <person name="Torney D.C."/>
            <person name="Tran-Gyamfi M."/>
            <person name="Tsai M."/>
            <person name="Ulanovsky L.E."/>
            <person name="Ustaszewska A."/>
            <person name="Vo N."/>
            <person name="White P.S."/>
            <person name="Williams A.L."/>
            <person name="Wills P.L."/>
            <person name="Wu J.-R."/>
            <person name="Wu K."/>
            <person name="Yang J."/>
            <person name="DeJong P."/>
            <person name="Bruce D."/>
            <person name="Doggett N.A."/>
            <person name="Deaven L."/>
            <person name="Schmutz J."/>
            <person name="Grimwood J."/>
            <person name="Richardson P."/>
            <person name="Rokhsar D.S."/>
            <person name="Eichler E.E."/>
            <person name="Gilna P."/>
            <person name="Lucas S.M."/>
            <person name="Myers R.M."/>
            <person name="Rubin E.M."/>
            <person name="Pennacchio L.A."/>
        </authorList>
    </citation>
    <scope>NUCLEOTIDE SEQUENCE [LARGE SCALE GENOMIC DNA]</scope>
</reference>
<reference key="10">
    <citation type="submission" date="2005-07" db="EMBL/GenBank/DDBJ databases">
        <authorList>
            <person name="Mural R.J."/>
            <person name="Istrail S."/>
            <person name="Sutton G.G."/>
            <person name="Florea L."/>
            <person name="Halpern A.L."/>
            <person name="Mobarry C.M."/>
            <person name="Lippert R."/>
            <person name="Walenz B."/>
            <person name="Shatkay H."/>
            <person name="Dew I."/>
            <person name="Miller J.R."/>
            <person name="Flanigan M.J."/>
            <person name="Edwards N.J."/>
            <person name="Bolanos R."/>
            <person name="Fasulo D."/>
            <person name="Halldorsson B.V."/>
            <person name="Hannenhalli S."/>
            <person name="Turner R."/>
            <person name="Yooseph S."/>
            <person name="Lu F."/>
            <person name="Nusskern D.R."/>
            <person name="Shue B.C."/>
            <person name="Zheng X.H."/>
            <person name="Zhong F."/>
            <person name="Delcher A.L."/>
            <person name="Huson D.H."/>
            <person name="Kravitz S.A."/>
            <person name="Mouchard L."/>
            <person name="Reinert K."/>
            <person name="Remington K.A."/>
            <person name="Clark A.G."/>
            <person name="Waterman M.S."/>
            <person name="Eichler E.E."/>
            <person name="Adams M.D."/>
            <person name="Hunkapiller M.W."/>
            <person name="Myers E.W."/>
            <person name="Venter J.C."/>
        </authorList>
    </citation>
    <scope>NUCLEOTIDE SEQUENCE [LARGE SCALE GENOMIC DNA]</scope>
</reference>
<reference key="11">
    <citation type="journal article" date="2004" name="Genome Res.">
        <title>The status, quality, and expansion of the NIH full-length cDNA project: the Mammalian Gene Collection (MGC).</title>
        <authorList>
            <consortium name="The MGC Project Team"/>
        </authorList>
    </citation>
    <scope>NUCLEOTIDE SEQUENCE [LARGE SCALE MRNA] (ISOFORM 1)</scope>
    <source>
        <tissue>Skin</tissue>
    </source>
</reference>
<reference key="12">
    <citation type="journal article" date="1999" name="Int. J. Cancer">
        <title>Antigens recognized by autologous antibody in patients with renal-cell carcinoma.</title>
        <authorList>
            <person name="Scanlan M.J."/>
            <person name="Gordan J.D."/>
            <person name="Williamson B."/>
            <person name="Stockert E."/>
            <person name="Bander N.H."/>
            <person name="Jongeneel C.V."/>
            <person name="Gure A.O."/>
            <person name="Jaeger D."/>
            <person name="Jaeger E."/>
            <person name="Knuth A."/>
            <person name="Chen Y.-T."/>
            <person name="Old L.J."/>
        </authorList>
    </citation>
    <scope>IDENTIFICATION AS A RENAL CANCER ANTIGEN</scope>
    <source>
        <tissue>Renal cell carcinoma</tissue>
    </source>
</reference>
<reference key="13">
    <citation type="journal article" date="2008" name="Proc. Natl. Acad. Sci. U.S.A.">
        <title>A quantitative atlas of mitotic phosphorylation.</title>
        <authorList>
            <person name="Dephoure N."/>
            <person name="Zhou C."/>
            <person name="Villen J."/>
            <person name="Beausoleil S.A."/>
            <person name="Bakalarski C.E."/>
            <person name="Elledge S.J."/>
            <person name="Gygi S.P."/>
        </authorList>
    </citation>
    <scope>PHOSPHORYLATION [LARGE SCALE ANALYSIS] AT SER-14; SER-15 AND SER-117</scope>
    <scope>IDENTIFICATION BY MASS SPECTROMETRY [LARGE SCALE ANALYSIS]</scope>
    <source>
        <tissue>Cervix carcinoma</tissue>
    </source>
</reference>
<reference key="14">
    <citation type="journal article" date="2010" name="Sci. Signal.">
        <title>Quantitative phosphoproteomics reveals widespread full phosphorylation site occupancy during mitosis.</title>
        <authorList>
            <person name="Olsen J.V."/>
            <person name="Vermeulen M."/>
            <person name="Santamaria A."/>
            <person name="Kumar C."/>
            <person name="Miller M.L."/>
            <person name="Jensen L.J."/>
            <person name="Gnad F."/>
            <person name="Cox J."/>
            <person name="Jensen T.S."/>
            <person name="Nigg E.A."/>
            <person name="Brunak S."/>
            <person name="Mann M."/>
        </authorList>
    </citation>
    <scope>IDENTIFICATION BY MASS SPECTROMETRY [LARGE SCALE ANALYSIS]</scope>
    <source>
        <tissue>Cervix carcinoma</tissue>
    </source>
</reference>
<reference key="15">
    <citation type="journal article" date="2011" name="BMC Syst. Biol.">
        <title>Initial characterization of the human central proteome.</title>
        <authorList>
            <person name="Burkard T.R."/>
            <person name="Planyavsky M."/>
            <person name="Kaupe I."/>
            <person name="Breitwieser F.P."/>
            <person name="Buerckstuemmer T."/>
            <person name="Bennett K.L."/>
            <person name="Superti-Furga G."/>
            <person name="Colinge J."/>
        </authorList>
    </citation>
    <scope>IDENTIFICATION BY MASS SPECTROMETRY [LARGE SCALE ANALYSIS]</scope>
</reference>
<reference key="16">
    <citation type="journal article" date="2011" name="Sci. Signal.">
        <title>System-wide temporal characterization of the proteome and phosphoproteome of human embryonic stem cell differentiation.</title>
        <authorList>
            <person name="Rigbolt K.T."/>
            <person name="Prokhorova T.A."/>
            <person name="Akimov V."/>
            <person name="Henningsen J."/>
            <person name="Johansen P.T."/>
            <person name="Kratchmarova I."/>
            <person name="Kassem M."/>
            <person name="Mann M."/>
            <person name="Olsen J.V."/>
            <person name="Blagoev B."/>
        </authorList>
    </citation>
    <scope>PHOSPHORYLATION [LARGE SCALE ANALYSIS] AT SER-14 AND SER-15</scope>
    <scope>IDENTIFICATION BY MASS SPECTROMETRY [LARGE SCALE ANALYSIS]</scope>
</reference>
<reference key="17">
    <citation type="journal article" date="2013" name="J. Proteome Res.">
        <title>Toward a comprehensive characterization of a human cancer cell phosphoproteome.</title>
        <authorList>
            <person name="Zhou H."/>
            <person name="Di Palma S."/>
            <person name="Preisinger C."/>
            <person name="Peng M."/>
            <person name="Polat A.N."/>
            <person name="Heck A.J."/>
            <person name="Mohammed S."/>
        </authorList>
    </citation>
    <scope>PHOSPHORYLATION [LARGE SCALE ANALYSIS] AT THR-31; SER-36 AND SER-117</scope>
    <scope>IDENTIFICATION BY MASS SPECTROMETRY [LARGE SCALE ANALYSIS]</scope>
    <source>
        <tissue>Cervix carcinoma</tissue>
        <tissue>Erythroleukemia</tissue>
    </source>
</reference>
<reference key="18">
    <citation type="journal article" date="2014" name="J. Proteomics">
        <title>An enzyme assisted RP-RPLC approach for in-depth analysis of human liver phosphoproteome.</title>
        <authorList>
            <person name="Bian Y."/>
            <person name="Song C."/>
            <person name="Cheng K."/>
            <person name="Dong M."/>
            <person name="Wang F."/>
            <person name="Huang J."/>
            <person name="Sun D."/>
            <person name="Wang L."/>
            <person name="Ye M."/>
            <person name="Zou H."/>
        </authorList>
    </citation>
    <scope>PHOSPHORYLATION [LARGE SCALE ANALYSIS] AT SER-14 AND SER-15</scope>
    <scope>IDENTIFICATION BY MASS SPECTROMETRY [LARGE SCALE ANALYSIS]</scope>
    <source>
        <tissue>Liver</tissue>
    </source>
</reference>
<reference key="19">
    <citation type="journal article" date="2015" name="Proteomics">
        <title>N-terminome analysis of the human mitochondrial proteome.</title>
        <authorList>
            <person name="Vaca Jacome A.S."/>
            <person name="Rabilloud T."/>
            <person name="Schaeffer-Reiss C."/>
            <person name="Rompais M."/>
            <person name="Ayoub D."/>
            <person name="Lane L."/>
            <person name="Bairoch A."/>
            <person name="Van Dorsselaer A."/>
            <person name="Carapito C."/>
        </authorList>
    </citation>
    <scope>IDENTIFICATION BY MASS SPECTROMETRY [LARGE SCALE ANALYSIS]</scope>
</reference>
<reference key="20">
    <citation type="journal article" date="2023" name="Hum. Mol. Genet.">
        <title>Syntaxin 4 is essential for hearing in human and zebrafish.</title>
        <authorList>
            <person name="Schrauwen I."/>
            <person name="Ghaffar A."/>
            <person name="Bharadwaj T."/>
            <person name="Shah K."/>
            <person name="Rehman S."/>
            <person name="Acharya A."/>
            <person name="Liaqat K."/>
            <person name="Lin N.S."/>
            <person name="Everard J.L."/>
            <person name="Khan A."/>
            <person name="Ahmed Z.M."/>
            <person name="Ahmad W."/>
            <person name="Riazuddin S."/>
            <person name="Leal S.M."/>
        </authorList>
    </citation>
    <scope>INVOLVEMENT IN DFNB123</scope>
    <scope>FUNCTION</scope>
</reference>
<accession>Q12846</accession>
<accession>A8MXY0</accession>
<accession>Q15525</accession>
<accession>Q6FHE8</accession>